<sequence length="311" mass="35563">MGSPNSLFEVESFLKNMFNDPLILGIKNTFARKMLASFITHSRVEETKKNYQAIGGKSPLTAHTLNLTNKLNELDCKRFYTYAMRYTPPFAYQVLEDIKTQGIQSVVLFSLYPQFSYSTIASSLIDAKAALQKLAFTPTLYEISSYHTHPDYISCIIERIKESLGADNPNEFVLLLSAHSLPQSRIDEGDPYQKQCEENKEVIQKALESEGIVFKKIALAYQSKVGRMKWIGPSTKETITKYKKHKMIIFPLSFTLDNSETEYELKILYASLAKELNVPQYRVCSCFNDNERFAKSIMNILEEHLRGKAEV</sequence>
<organism>
    <name type="scientific">Helicobacter hepaticus (strain ATCC 51449 / 3B1)</name>
    <dbReference type="NCBI Taxonomy" id="235279"/>
    <lineage>
        <taxon>Bacteria</taxon>
        <taxon>Pseudomonadati</taxon>
        <taxon>Campylobacterota</taxon>
        <taxon>Epsilonproteobacteria</taxon>
        <taxon>Campylobacterales</taxon>
        <taxon>Helicobacteraceae</taxon>
        <taxon>Helicobacter</taxon>
    </lineage>
</organism>
<gene>
    <name evidence="1" type="primary">hemH</name>
    <name type="ordered locus">HH_0996</name>
</gene>
<evidence type="ECO:0000255" key="1">
    <source>
        <dbReference type="HAMAP-Rule" id="MF_00323"/>
    </source>
</evidence>
<feature type="chain" id="PRO_0000175148" description="Ferrochelatase">
    <location>
        <begin position="1"/>
        <end position="311"/>
    </location>
</feature>
<feature type="binding site" evidence="1">
    <location>
        <position position="179"/>
    </location>
    <ligand>
        <name>Fe cation</name>
        <dbReference type="ChEBI" id="CHEBI:24875"/>
    </ligand>
</feature>
<feature type="binding site" evidence="1">
    <location>
        <position position="260"/>
    </location>
    <ligand>
        <name>Fe cation</name>
        <dbReference type="ChEBI" id="CHEBI:24875"/>
    </ligand>
</feature>
<accession>Q7VHH1</accession>
<proteinExistence type="inferred from homology"/>
<keyword id="KW-0963">Cytoplasm</keyword>
<keyword id="KW-0350">Heme biosynthesis</keyword>
<keyword id="KW-0408">Iron</keyword>
<keyword id="KW-0456">Lyase</keyword>
<keyword id="KW-0479">Metal-binding</keyword>
<keyword id="KW-0627">Porphyrin biosynthesis</keyword>
<keyword id="KW-1185">Reference proteome</keyword>
<dbReference type="EC" id="4.98.1.1" evidence="1"/>
<dbReference type="EMBL" id="AE017125">
    <property type="protein sequence ID" value="AAP77593.1"/>
    <property type="molecule type" value="Genomic_DNA"/>
</dbReference>
<dbReference type="SMR" id="Q7VHH1"/>
<dbReference type="STRING" id="235279.HH_0996"/>
<dbReference type="KEGG" id="hhe:HH_0996"/>
<dbReference type="eggNOG" id="COG0276">
    <property type="taxonomic scope" value="Bacteria"/>
</dbReference>
<dbReference type="HOGENOM" id="CLU_018884_4_1_7"/>
<dbReference type="UniPathway" id="UPA00252">
    <property type="reaction ID" value="UER00325"/>
</dbReference>
<dbReference type="Proteomes" id="UP000002495">
    <property type="component" value="Chromosome"/>
</dbReference>
<dbReference type="GO" id="GO:0005737">
    <property type="term" value="C:cytoplasm"/>
    <property type="evidence" value="ECO:0007669"/>
    <property type="project" value="UniProtKB-SubCell"/>
</dbReference>
<dbReference type="GO" id="GO:0004325">
    <property type="term" value="F:ferrochelatase activity"/>
    <property type="evidence" value="ECO:0007669"/>
    <property type="project" value="UniProtKB-UniRule"/>
</dbReference>
<dbReference type="GO" id="GO:0046872">
    <property type="term" value="F:metal ion binding"/>
    <property type="evidence" value="ECO:0007669"/>
    <property type="project" value="UniProtKB-KW"/>
</dbReference>
<dbReference type="GO" id="GO:0006783">
    <property type="term" value="P:heme biosynthetic process"/>
    <property type="evidence" value="ECO:0007669"/>
    <property type="project" value="UniProtKB-UniRule"/>
</dbReference>
<dbReference type="CDD" id="cd00419">
    <property type="entry name" value="Ferrochelatase_C"/>
    <property type="match status" value="1"/>
</dbReference>
<dbReference type="CDD" id="cd03411">
    <property type="entry name" value="Ferrochelatase_N"/>
    <property type="match status" value="1"/>
</dbReference>
<dbReference type="Gene3D" id="3.40.50.1400">
    <property type="match status" value="2"/>
</dbReference>
<dbReference type="HAMAP" id="MF_00323">
    <property type="entry name" value="Ferrochelatase"/>
    <property type="match status" value="1"/>
</dbReference>
<dbReference type="InterPro" id="IPR001015">
    <property type="entry name" value="Ferrochelatase"/>
</dbReference>
<dbReference type="InterPro" id="IPR019772">
    <property type="entry name" value="Ferrochelatase_AS"/>
</dbReference>
<dbReference type="InterPro" id="IPR033644">
    <property type="entry name" value="Ferrochelatase_C"/>
</dbReference>
<dbReference type="InterPro" id="IPR033659">
    <property type="entry name" value="Ferrochelatase_N"/>
</dbReference>
<dbReference type="NCBIfam" id="TIGR00109">
    <property type="entry name" value="hemH"/>
    <property type="match status" value="1"/>
</dbReference>
<dbReference type="PANTHER" id="PTHR11108">
    <property type="entry name" value="FERROCHELATASE"/>
    <property type="match status" value="1"/>
</dbReference>
<dbReference type="PANTHER" id="PTHR11108:SF1">
    <property type="entry name" value="FERROCHELATASE, MITOCHONDRIAL"/>
    <property type="match status" value="1"/>
</dbReference>
<dbReference type="Pfam" id="PF00762">
    <property type="entry name" value="Ferrochelatase"/>
    <property type="match status" value="1"/>
</dbReference>
<dbReference type="SUPFAM" id="SSF53800">
    <property type="entry name" value="Chelatase"/>
    <property type="match status" value="1"/>
</dbReference>
<dbReference type="PROSITE" id="PS00534">
    <property type="entry name" value="FERROCHELATASE"/>
    <property type="match status" value="1"/>
</dbReference>
<reference key="1">
    <citation type="journal article" date="2003" name="Proc. Natl. Acad. Sci. U.S.A.">
        <title>The complete genome sequence of the carcinogenic bacterium Helicobacter hepaticus.</title>
        <authorList>
            <person name="Suerbaum S."/>
            <person name="Josenhans C."/>
            <person name="Sterzenbach T."/>
            <person name="Drescher B."/>
            <person name="Brandt P."/>
            <person name="Bell M."/>
            <person name="Droege M."/>
            <person name="Fartmann B."/>
            <person name="Fischer H.-P."/>
            <person name="Ge Z."/>
            <person name="Hoerster A."/>
            <person name="Holland R."/>
            <person name="Klein K."/>
            <person name="Koenig J."/>
            <person name="Macko L."/>
            <person name="Mendz G.L."/>
            <person name="Nyakatura G."/>
            <person name="Schauer D.B."/>
            <person name="Shen Z."/>
            <person name="Weber J."/>
            <person name="Frosch M."/>
            <person name="Fox J.G."/>
        </authorList>
    </citation>
    <scope>NUCLEOTIDE SEQUENCE [LARGE SCALE GENOMIC DNA]</scope>
    <source>
        <strain>ATCC 51449 / 3B1</strain>
    </source>
</reference>
<name>HEMH_HELHP</name>
<protein>
    <recommendedName>
        <fullName evidence="1">Ferrochelatase</fullName>
        <ecNumber evidence="1">4.98.1.1</ecNumber>
    </recommendedName>
    <alternativeName>
        <fullName evidence="1">Heme synthase</fullName>
    </alternativeName>
    <alternativeName>
        <fullName evidence="1">Protoheme ferro-lyase</fullName>
    </alternativeName>
</protein>
<comment type="function">
    <text evidence="1">Catalyzes the ferrous insertion into protoporphyrin IX.</text>
</comment>
<comment type="catalytic activity">
    <reaction evidence="1">
        <text>heme b + 2 H(+) = protoporphyrin IX + Fe(2+)</text>
        <dbReference type="Rhea" id="RHEA:22584"/>
        <dbReference type="ChEBI" id="CHEBI:15378"/>
        <dbReference type="ChEBI" id="CHEBI:29033"/>
        <dbReference type="ChEBI" id="CHEBI:57306"/>
        <dbReference type="ChEBI" id="CHEBI:60344"/>
        <dbReference type="EC" id="4.98.1.1"/>
    </reaction>
</comment>
<comment type="pathway">
    <text evidence="1">Porphyrin-containing compound metabolism; protoheme biosynthesis; protoheme from protoporphyrin-IX: step 1/1.</text>
</comment>
<comment type="subcellular location">
    <subcellularLocation>
        <location evidence="1">Cytoplasm</location>
    </subcellularLocation>
</comment>
<comment type="similarity">
    <text evidence="1">Belongs to the ferrochelatase family.</text>
</comment>